<organism>
    <name type="scientific">Pseudoalteromonas atlantica (strain T6c / ATCC BAA-1087)</name>
    <dbReference type="NCBI Taxonomy" id="3042615"/>
    <lineage>
        <taxon>Bacteria</taxon>
        <taxon>Pseudomonadati</taxon>
        <taxon>Pseudomonadota</taxon>
        <taxon>Gammaproteobacteria</taxon>
        <taxon>Alteromonadales</taxon>
        <taxon>Alteromonadaceae</taxon>
        <taxon>Paraglaciecola</taxon>
    </lineage>
</organism>
<name>TRPB_PSEA6</name>
<dbReference type="EC" id="4.2.1.20" evidence="1"/>
<dbReference type="EMBL" id="CP000388">
    <property type="protein sequence ID" value="ABG41343.1"/>
    <property type="molecule type" value="Genomic_DNA"/>
</dbReference>
<dbReference type="RefSeq" id="WP_011575600.1">
    <property type="nucleotide sequence ID" value="NC_008228.1"/>
</dbReference>
<dbReference type="SMR" id="Q15RZ5"/>
<dbReference type="STRING" id="342610.Patl_2833"/>
<dbReference type="KEGG" id="pat:Patl_2833"/>
<dbReference type="eggNOG" id="COG0133">
    <property type="taxonomic scope" value="Bacteria"/>
</dbReference>
<dbReference type="HOGENOM" id="CLU_016734_3_1_6"/>
<dbReference type="OrthoDB" id="9766131at2"/>
<dbReference type="UniPathway" id="UPA00035">
    <property type="reaction ID" value="UER00044"/>
</dbReference>
<dbReference type="Proteomes" id="UP000001981">
    <property type="component" value="Chromosome"/>
</dbReference>
<dbReference type="GO" id="GO:0005737">
    <property type="term" value="C:cytoplasm"/>
    <property type="evidence" value="ECO:0007669"/>
    <property type="project" value="TreeGrafter"/>
</dbReference>
<dbReference type="GO" id="GO:0004834">
    <property type="term" value="F:tryptophan synthase activity"/>
    <property type="evidence" value="ECO:0007669"/>
    <property type="project" value="UniProtKB-UniRule"/>
</dbReference>
<dbReference type="CDD" id="cd06446">
    <property type="entry name" value="Trp-synth_B"/>
    <property type="match status" value="1"/>
</dbReference>
<dbReference type="FunFam" id="3.40.50.1100:FF:000001">
    <property type="entry name" value="Tryptophan synthase beta chain"/>
    <property type="match status" value="1"/>
</dbReference>
<dbReference type="FunFam" id="3.40.50.1100:FF:000004">
    <property type="entry name" value="Tryptophan synthase beta chain"/>
    <property type="match status" value="1"/>
</dbReference>
<dbReference type="Gene3D" id="3.40.50.1100">
    <property type="match status" value="2"/>
</dbReference>
<dbReference type="HAMAP" id="MF_00133">
    <property type="entry name" value="Trp_synth_beta"/>
    <property type="match status" value="1"/>
</dbReference>
<dbReference type="InterPro" id="IPR006653">
    <property type="entry name" value="Trp_synth_b_CS"/>
</dbReference>
<dbReference type="InterPro" id="IPR006654">
    <property type="entry name" value="Trp_synth_beta"/>
</dbReference>
<dbReference type="InterPro" id="IPR023026">
    <property type="entry name" value="Trp_synth_beta/beta-like"/>
</dbReference>
<dbReference type="InterPro" id="IPR001926">
    <property type="entry name" value="TrpB-like_PALP"/>
</dbReference>
<dbReference type="InterPro" id="IPR036052">
    <property type="entry name" value="TrpB-like_PALP_sf"/>
</dbReference>
<dbReference type="NCBIfam" id="TIGR00263">
    <property type="entry name" value="trpB"/>
    <property type="match status" value="1"/>
</dbReference>
<dbReference type="PANTHER" id="PTHR48077:SF3">
    <property type="entry name" value="TRYPTOPHAN SYNTHASE"/>
    <property type="match status" value="1"/>
</dbReference>
<dbReference type="PANTHER" id="PTHR48077">
    <property type="entry name" value="TRYPTOPHAN SYNTHASE-RELATED"/>
    <property type="match status" value="1"/>
</dbReference>
<dbReference type="Pfam" id="PF00291">
    <property type="entry name" value="PALP"/>
    <property type="match status" value="1"/>
</dbReference>
<dbReference type="PIRSF" id="PIRSF001413">
    <property type="entry name" value="Trp_syn_beta"/>
    <property type="match status" value="1"/>
</dbReference>
<dbReference type="SUPFAM" id="SSF53686">
    <property type="entry name" value="Tryptophan synthase beta subunit-like PLP-dependent enzymes"/>
    <property type="match status" value="1"/>
</dbReference>
<dbReference type="PROSITE" id="PS00168">
    <property type="entry name" value="TRP_SYNTHASE_BETA"/>
    <property type="match status" value="1"/>
</dbReference>
<evidence type="ECO:0000255" key="1">
    <source>
        <dbReference type="HAMAP-Rule" id="MF_00133"/>
    </source>
</evidence>
<accession>Q15RZ5</accession>
<gene>
    <name evidence="1" type="primary">trpB</name>
    <name type="ordered locus">Patl_2833</name>
</gene>
<comment type="function">
    <text evidence="1">The beta subunit is responsible for the synthesis of L-tryptophan from indole and L-serine.</text>
</comment>
<comment type="catalytic activity">
    <reaction evidence="1">
        <text>(1S,2R)-1-C-(indol-3-yl)glycerol 3-phosphate + L-serine = D-glyceraldehyde 3-phosphate + L-tryptophan + H2O</text>
        <dbReference type="Rhea" id="RHEA:10532"/>
        <dbReference type="ChEBI" id="CHEBI:15377"/>
        <dbReference type="ChEBI" id="CHEBI:33384"/>
        <dbReference type="ChEBI" id="CHEBI:57912"/>
        <dbReference type="ChEBI" id="CHEBI:58866"/>
        <dbReference type="ChEBI" id="CHEBI:59776"/>
        <dbReference type="EC" id="4.2.1.20"/>
    </reaction>
</comment>
<comment type="cofactor">
    <cofactor evidence="1">
        <name>pyridoxal 5'-phosphate</name>
        <dbReference type="ChEBI" id="CHEBI:597326"/>
    </cofactor>
</comment>
<comment type="pathway">
    <text evidence="1">Amino-acid biosynthesis; L-tryptophan biosynthesis; L-tryptophan from chorismate: step 5/5.</text>
</comment>
<comment type="subunit">
    <text evidence="1">Tetramer of two alpha and two beta chains.</text>
</comment>
<comment type="similarity">
    <text evidence="1">Belongs to the TrpB family.</text>
</comment>
<sequence>MNHLESKFGQFGGMYVPELLIPALDQLEQAFIDAQNDPEFQKEFMELLTDYAGRPTAMTLSRNLVSNPNVKLYLKREDLLHGGAHKTNQVLGQALLTKRMGKTEVIAETGAGQHGVATALACALLGLKARIYMGAKDVERQAPNVFRMRLMGAEVIPVNAGSGTLKDAVNEAMRDWSATYDKAHYLLGTAAGPHPFPTIVREFHRMIGEETRAQIMAKEGRLPDAVVACVGGGSNAIGMFADFIDEPSVQLIGVEPAGKGLHTAEHGAAIGKGTTGILHGAYSYIMQDEDGQIEESYSVSAGLDYPAVGPQHAHLHDIGRATYAAVTDDEALYAFQLLSRKEGIIPALESSHALAHALNMADEAEDGTIIVVNLSGRGDKDLAHVHSILGGQTNE</sequence>
<keyword id="KW-0028">Amino-acid biosynthesis</keyword>
<keyword id="KW-0057">Aromatic amino acid biosynthesis</keyword>
<keyword id="KW-0456">Lyase</keyword>
<keyword id="KW-0663">Pyridoxal phosphate</keyword>
<keyword id="KW-0822">Tryptophan biosynthesis</keyword>
<feature type="chain" id="PRO_1000018375" description="Tryptophan synthase beta chain">
    <location>
        <begin position="1"/>
        <end position="395"/>
    </location>
</feature>
<feature type="modified residue" description="N6-(pyridoxal phosphate)lysine" evidence="1">
    <location>
        <position position="86"/>
    </location>
</feature>
<protein>
    <recommendedName>
        <fullName evidence="1">Tryptophan synthase beta chain</fullName>
        <ecNumber evidence="1">4.2.1.20</ecNumber>
    </recommendedName>
</protein>
<reference key="1">
    <citation type="submission" date="2006-06" db="EMBL/GenBank/DDBJ databases">
        <title>Complete sequence of Pseudoalteromonas atlantica T6c.</title>
        <authorList>
            <consortium name="US DOE Joint Genome Institute"/>
            <person name="Copeland A."/>
            <person name="Lucas S."/>
            <person name="Lapidus A."/>
            <person name="Barry K."/>
            <person name="Detter J.C."/>
            <person name="Glavina del Rio T."/>
            <person name="Hammon N."/>
            <person name="Israni S."/>
            <person name="Dalin E."/>
            <person name="Tice H."/>
            <person name="Pitluck S."/>
            <person name="Saunders E."/>
            <person name="Brettin T."/>
            <person name="Bruce D."/>
            <person name="Han C."/>
            <person name="Tapia R."/>
            <person name="Gilna P."/>
            <person name="Schmutz J."/>
            <person name="Larimer F."/>
            <person name="Land M."/>
            <person name="Hauser L."/>
            <person name="Kyrpides N."/>
            <person name="Kim E."/>
            <person name="Karls A.C."/>
            <person name="Bartlett D."/>
            <person name="Higgins B.P."/>
            <person name="Richardson P."/>
        </authorList>
    </citation>
    <scope>NUCLEOTIDE SEQUENCE [LARGE SCALE GENOMIC DNA]</scope>
    <source>
        <strain>T6c / ATCC BAA-1087</strain>
    </source>
</reference>
<proteinExistence type="inferred from homology"/>